<protein>
    <recommendedName>
        <fullName evidence="2">Ornithine carbamoyltransferase</fullName>
        <shortName evidence="2">OTCase</shortName>
        <ecNumber evidence="2">2.1.3.3</ecNumber>
    </recommendedName>
</protein>
<feature type="chain" id="PRO_0000112978" description="Ornithine carbamoyltransferase">
    <location>
        <begin position="1"/>
        <end position="338"/>
    </location>
</feature>
<feature type="binding site" evidence="2">
    <location>
        <begin position="56"/>
        <end position="59"/>
    </location>
    <ligand>
        <name>carbamoyl phosphate</name>
        <dbReference type="ChEBI" id="CHEBI:58228"/>
    </ligand>
</feature>
<feature type="binding site" evidence="2">
    <location>
        <position position="83"/>
    </location>
    <ligand>
        <name>carbamoyl phosphate</name>
        <dbReference type="ChEBI" id="CHEBI:58228"/>
    </ligand>
</feature>
<feature type="binding site" evidence="2">
    <location>
        <position position="107"/>
    </location>
    <ligand>
        <name>carbamoyl phosphate</name>
        <dbReference type="ChEBI" id="CHEBI:58228"/>
    </ligand>
</feature>
<feature type="binding site" evidence="2">
    <location>
        <begin position="134"/>
        <end position="137"/>
    </location>
    <ligand>
        <name>carbamoyl phosphate</name>
        <dbReference type="ChEBI" id="CHEBI:58228"/>
    </ligand>
</feature>
<feature type="binding site" evidence="2">
    <location>
        <position position="168"/>
    </location>
    <ligand>
        <name>L-ornithine</name>
        <dbReference type="ChEBI" id="CHEBI:46911"/>
    </ligand>
</feature>
<feature type="binding site" evidence="2">
    <location>
        <position position="232"/>
    </location>
    <ligand>
        <name>L-ornithine</name>
        <dbReference type="ChEBI" id="CHEBI:46911"/>
    </ligand>
</feature>
<feature type="binding site" evidence="2">
    <location>
        <begin position="236"/>
        <end position="237"/>
    </location>
    <ligand>
        <name>L-ornithine</name>
        <dbReference type="ChEBI" id="CHEBI:46911"/>
    </ligand>
</feature>
<feature type="binding site" evidence="2">
    <location>
        <begin position="274"/>
        <end position="275"/>
    </location>
    <ligand>
        <name>carbamoyl phosphate</name>
        <dbReference type="ChEBI" id="CHEBI:58228"/>
    </ligand>
</feature>
<feature type="binding site" evidence="2">
    <location>
        <position position="320"/>
    </location>
    <ligand>
        <name>carbamoyl phosphate</name>
        <dbReference type="ChEBI" id="CHEBI:58228"/>
    </ligand>
</feature>
<proteinExistence type="inferred from homology"/>
<gene>
    <name evidence="2" type="primary">argI</name>
    <name type="ordered locus">plu4490</name>
</gene>
<evidence type="ECO:0000250" key="1"/>
<evidence type="ECO:0000255" key="2">
    <source>
        <dbReference type="HAMAP-Rule" id="MF_01109"/>
    </source>
</evidence>
<dbReference type="EC" id="2.1.3.3" evidence="2"/>
<dbReference type="EMBL" id="BX571874">
    <property type="protein sequence ID" value="CAE16862.1"/>
    <property type="molecule type" value="Genomic_DNA"/>
</dbReference>
<dbReference type="RefSeq" id="WP_011148571.1">
    <property type="nucleotide sequence ID" value="NC_005126.1"/>
</dbReference>
<dbReference type="SMR" id="Q7MZ18"/>
<dbReference type="STRING" id="243265.plu4490"/>
<dbReference type="GeneID" id="48850696"/>
<dbReference type="KEGG" id="plu:plu4490"/>
<dbReference type="eggNOG" id="COG0078">
    <property type="taxonomic scope" value="Bacteria"/>
</dbReference>
<dbReference type="HOGENOM" id="CLU_043846_3_1_6"/>
<dbReference type="OrthoDB" id="9802587at2"/>
<dbReference type="UniPathway" id="UPA00068">
    <property type="reaction ID" value="UER00112"/>
</dbReference>
<dbReference type="Proteomes" id="UP000002514">
    <property type="component" value="Chromosome"/>
</dbReference>
<dbReference type="GO" id="GO:0005737">
    <property type="term" value="C:cytoplasm"/>
    <property type="evidence" value="ECO:0007669"/>
    <property type="project" value="UniProtKB-SubCell"/>
</dbReference>
<dbReference type="GO" id="GO:0016597">
    <property type="term" value="F:amino acid binding"/>
    <property type="evidence" value="ECO:0007669"/>
    <property type="project" value="InterPro"/>
</dbReference>
<dbReference type="GO" id="GO:0004585">
    <property type="term" value="F:ornithine carbamoyltransferase activity"/>
    <property type="evidence" value="ECO:0007669"/>
    <property type="project" value="UniProtKB-UniRule"/>
</dbReference>
<dbReference type="GO" id="GO:0042450">
    <property type="term" value="P:arginine biosynthetic process via ornithine"/>
    <property type="evidence" value="ECO:0007669"/>
    <property type="project" value="TreeGrafter"/>
</dbReference>
<dbReference type="GO" id="GO:0019240">
    <property type="term" value="P:citrulline biosynthetic process"/>
    <property type="evidence" value="ECO:0007669"/>
    <property type="project" value="TreeGrafter"/>
</dbReference>
<dbReference type="GO" id="GO:0006526">
    <property type="term" value="P:L-arginine biosynthetic process"/>
    <property type="evidence" value="ECO:0007669"/>
    <property type="project" value="UniProtKB-UniRule"/>
</dbReference>
<dbReference type="FunFam" id="3.40.50.1370:FF:000004">
    <property type="entry name" value="Ornithine carbamoyltransferase"/>
    <property type="match status" value="1"/>
</dbReference>
<dbReference type="Gene3D" id="3.40.50.1370">
    <property type="entry name" value="Aspartate/ornithine carbamoyltransferase"/>
    <property type="match status" value="2"/>
</dbReference>
<dbReference type="HAMAP" id="MF_01109">
    <property type="entry name" value="OTCase"/>
    <property type="match status" value="1"/>
</dbReference>
<dbReference type="InterPro" id="IPR006132">
    <property type="entry name" value="Asp/Orn_carbamoyltranf_P-bd"/>
</dbReference>
<dbReference type="InterPro" id="IPR006130">
    <property type="entry name" value="Asp/Orn_carbamoylTrfase"/>
</dbReference>
<dbReference type="InterPro" id="IPR036901">
    <property type="entry name" value="Asp/Orn_carbamoylTrfase_sf"/>
</dbReference>
<dbReference type="InterPro" id="IPR006131">
    <property type="entry name" value="Asp_carbamoyltransf_Asp/Orn-bd"/>
</dbReference>
<dbReference type="InterPro" id="IPR002292">
    <property type="entry name" value="Orn/put_carbamltrans"/>
</dbReference>
<dbReference type="InterPro" id="IPR024904">
    <property type="entry name" value="OTCase_ArgI"/>
</dbReference>
<dbReference type="NCBIfam" id="TIGR00658">
    <property type="entry name" value="orni_carb_tr"/>
    <property type="match status" value="1"/>
</dbReference>
<dbReference type="NCBIfam" id="NF003286">
    <property type="entry name" value="PRK04284.1"/>
    <property type="match status" value="1"/>
</dbReference>
<dbReference type="NCBIfam" id="NF009213">
    <property type="entry name" value="PRK12562.1"/>
    <property type="match status" value="1"/>
</dbReference>
<dbReference type="PANTHER" id="PTHR45753:SF4">
    <property type="entry name" value="ORNITHINE CARBAMOYLTRANSFERASE SUBUNIT F-RELATED"/>
    <property type="match status" value="1"/>
</dbReference>
<dbReference type="PANTHER" id="PTHR45753">
    <property type="entry name" value="ORNITHINE CARBAMOYLTRANSFERASE, MITOCHONDRIAL"/>
    <property type="match status" value="1"/>
</dbReference>
<dbReference type="Pfam" id="PF00185">
    <property type="entry name" value="OTCace"/>
    <property type="match status" value="1"/>
</dbReference>
<dbReference type="Pfam" id="PF02729">
    <property type="entry name" value="OTCace_N"/>
    <property type="match status" value="1"/>
</dbReference>
<dbReference type="PRINTS" id="PR00100">
    <property type="entry name" value="AOTCASE"/>
</dbReference>
<dbReference type="PRINTS" id="PR00102">
    <property type="entry name" value="OTCASE"/>
</dbReference>
<dbReference type="SUPFAM" id="SSF53671">
    <property type="entry name" value="Aspartate/ornithine carbamoyltransferase"/>
    <property type="match status" value="1"/>
</dbReference>
<dbReference type="PROSITE" id="PS00097">
    <property type="entry name" value="CARBAMOYLTRANSFERASE"/>
    <property type="match status" value="1"/>
</dbReference>
<name>OTC_PHOLL</name>
<keyword id="KW-0028">Amino-acid biosynthesis</keyword>
<keyword id="KW-0055">Arginine biosynthesis</keyword>
<keyword id="KW-0963">Cytoplasm</keyword>
<keyword id="KW-1185">Reference proteome</keyword>
<keyword id="KW-0808">Transferase</keyword>
<accession>Q7MZ18</accession>
<organism>
    <name type="scientific">Photorhabdus laumondii subsp. laumondii (strain DSM 15139 / CIP 105565 / TT01)</name>
    <name type="common">Photorhabdus luminescens subsp. laumondii</name>
    <dbReference type="NCBI Taxonomy" id="243265"/>
    <lineage>
        <taxon>Bacteria</taxon>
        <taxon>Pseudomonadati</taxon>
        <taxon>Pseudomonadota</taxon>
        <taxon>Gammaproteobacteria</taxon>
        <taxon>Enterobacterales</taxon>
        <taxon>Morganellaceae</taxon>
        <taxon>Photorhabdus</taxon>
    </lineage>
</organism>
<reference key="1">
    <citation type="journal article" date="2003" name="Nat. Biotechnol.">
        <title>The genome sequence of the entomopathogenic bacterium Photorhabdus luminescens.</title>
        <authorList>
            <person name="Duchaud E."/>
            <person name="Rusniok C."/>
            <person name="Frangeul L."/>
            <person name="Buchrieser C."/>
            <person name="Givaudan A."/>
            <person name="Taourit S."/>
            <person name="Bocs S."/>
            <person name="Boursaux-Eude C."/>
            <person name="Chandler M."/>
            <person name="Charles J.-F."/>
            <person name="Dassa E."/>
            <person name="Derose R."/>
            <person name="Derzelle S."/>
            <person name="Freyssinet G."/>
            <person name="Gaudriault S."/>
            <person name="Medigue C."/>
            <person name="Lanois A."/>
            <person name="Powell K."/>
            <person name="Siguier P."/>
            <person name="Vincent R."/>
            <person name="Wingate V."/>
            <person name="Zouine M."/>
            <person name="Glaser P."/>
            <person name="Boemare N."/>
            <person name="Danchin A."/>
            <person name="Kunst F."/>
        </authorList>
    </citation>
    <scope>NUCLEOTIDE SEQUENCE [LARGE SCALE GENOMIC DNA]</scope>
    <source>
        <strain>DSM 15139 / CIP 105565 / TT01</strain>
    </source>
</reference>
<sequence>MNPFHQRHFLRLLDFSSAEIHALLKLAAELKSTKKSGTEKALLTGKNIVLIFEKDSTRTRCSFEVAAYDQGANITYLGPSGNQIGHKESIKDTARILGRMYDGIQYRGYAQTIVESLAKYAGVPVWNGLTDEFHPTQLLADLLTIQEHQPEKPLSEIKFAYLGDARNNMGNTMLEAAALTGMDVRLIAPEKYWPNAALVTECQKLAEKTGGKITLTENITEGVKNTDFLYTDVWVSMGEPKDVWQQRVHLLKPYQVNMDVVSMTGNPQVKFLHCLPAFHDEETALGKQLAAEFNMYGGLEVTNEVFESEHSIVFDQGENRLHTIKAVMVATLANDLKI</sequence>
<comment type="function">
    <text evidence="1">Reversibly catalyzes the transfer of the carbamoyl group from carbamoyl phosphate (CP) to the N(epsilon) atom of ornithine (ORN) to produce L-citrulline.</text>
</comment>
<comment type="catalytic activity">
    <reaction evidence="2">
        <text>carbamoyl phosphate + L-ornithine = L-citrulline + phosphate + H(+)</text>
        <dbReference type="Rhea" id="RHEA:19513"/>
        <dbReference type="ChEBI" id="CHEBI:15378"/>
        <dbReference type="ChEBI" id="CHEBI:43474"/>
        <dbReference type="ChEBI" id="CHEBI:46911"/>
        <dbReference type="ChEBI" id="CHEBI:57743"/>
        <dbReference type="ChEBI" id="CHEBI:58228"/>
        <dbReference type="EC" id="2.1.3.3"/>
    </reaction>
</comment>
<comment type="pathway">
    <text evidence="2">Amino-acid biosynthesis; L-arginine biosynthesis; L-arginine from L-ornithine and carbamoyl phosphate: step 1/3.</text>
</comment>
<comment type="subcellular location">
    <subcellularLocation>
        <location evidence="2">Cytoplasm</location>
    </subcellularLocation>
</comment>
<comment type="similarity">
    <text evidence="2">Belongs to the aspartate/ornithine carbamoyltransferase superfamily. OTCase family.</text>
</comment>